<accession>Q47K02</accession>
<proteinExistence type="inferred from homology"/>
<evidence type="ECO:0000255" key="1">
    <source>
        <dbReference type="HAMAP-Rule" id="MF_00636"/>
    </source>
</evidence>
<evidence type="ECO:0000305" key="2"/>
<keyword id="KW-0067">ATP-binding</keyword>
<keyword id="KW-0342">GTP-binding</keyword>
<keyword id="KW-0547">Nucleotide-binding</keyword>
<name>Y070_DECAR</name>
<dbReference type="EMBL" id="CP000089">
    <property type="protein sequence ID" value="AAZ44829.1"/>
    <property type="status" value="ALT_INIT"/>
    <property type="molecule type" value="Genomic_DNA"/>
</dbReference>
<dbReference type="SMR" id="Q47K02"/>
<dbReference type="STRING" id="159087.Daro_0070"/>
<dbReference type="KEGG" id="dar:Daro_0070"/>
<dbReference type="eggNOG" id="COG1660">
    <property type="taxonomic scope" value="Bacteria"/>
</dbReference>
<dbReference type="HOGENOM" id="CLU_059558_1_1_4"/>
<dbReference type="OrthoDB" id="9784461at2"/>
<dbReference type="GO" id="GO:0005524">
    <property type="term" value="F:ATP binding"/>
    <property type="evidence" value="ECO:0007669"/>
    <property type="project" value="UniProtKB-UniRule"/>
</dbReference>
<dbReference type="GO" id="GO:0005525">
    <property type="term" value="F:GTP binding"/>
    <property type="evidence" value="ECO:0007669"/>
    <property type="project" value="UniProtKB-UniRule"/>
</dbReference>
<dbReference type="HAMAP" id="MF_00636">
    <property type="entry name" value="RapZ_like"/>
    <property type="match status" value="1"/>
</dbReference>
<dbReference type="InterPro" id="IPR027417">
    <property type="entry name" value="P-loop_NTPase"/>
</dbReference>
<dbReference type="InterPro" id="IPR005337">
    <property type="entry name" value="RapZ-like"/>
</dbReference>
<dbReference type="InterPro" id="IPR053930">
    <property type="entry name" value="RapZ-like_N"/>
</dbReference>
<dbReference type="InterPro" id="IPR053931">
    <property type="entry name" value="RapZ_C"/>
</dbReference>
<dbReference type="NCBIfam" id="NF003828">
    <property type="entry name" value="PRK05416.1"/>
    <property type="match status" value="1"/>
</dbReference>
<dbReference type="PANTHER" id="PTHR30448">
    <property type="entry name" value="RNASE ADAPTER PROTEIN RAPZ"/>
    <property type="match status" value="1"/>
</dbReference>
<dbReference type="PANTHER" id="PTHR30448:SF0">
    <property type="entry name" value="RNASE ADAPTER PROTEIN RAPZ"/>
    <property type="match status" value="1"/>
</dbReference>
<dbReference type="Pfam" id="PF22740">
    <property type="entry name" value="PapZ_C"/>
    <property type="match status" value="1"/>
</dbReference>
<dbReference type="Pfam" id="PF03668">
    <property type="entry name" value="RapZ-like_N"/>
    <property type="match status" value="1"/>
</dbReference>
<dbReference type="PIRSF" id="PIRSF005052">
    <property type="entry name" value="P-loopkin"/>
    <property type="match status" value="1"/>
</dbReference>
<dbReference type="SUPFAM" id="SSF52540">
    <property type="entry name" value="P-loop containing nucleoside triphosphate hydrolases"/>
    <property type="match status" value="1"/>
</dbReference>
<reference key="1">
    <citation type="journal article" date="2009" name="BMC Genomics">
        <title>Metabolic analysis of the soil microbe Dechloromonas aromatica str. RCB: indications of a surprisingly complex life-style and cryptic anaerobic pathways for aromatic degradation.</title>
        <authorList>
            <person name="Salinero K.K."/>
            <person name="Keller K."/>
            <person name="Feil W.S."/>
            <person name="Feil H."/>
            <person name="Trong S."/>
            <person name="Di Bartolo G."/>
            <person name="Lapidus A."/>
        </authorList>
    </citation>
    <scope>NUCLEOTIDE SEQUENCE [LARGE SCALE GENOMIC DNA]</scope>
    <source>
        <strain>RCB</strain>
    </source>
</reference>
<comment type="function">
    <text evidence="1">Displays ATPase and GTPase activities.</text>
</comment>
<comment type="similarity">
    <text evidence="1">Belongs to the RapZ-like family.</text>
</comment>
<comment type="sequence caution" evidence="2">
    <conflict type="erroneous initiation">
        <sequence resource="EMBL-CDS" id="AAZ44829"/>
    </conflict>
</comment>
<sequence length="281" mass="31680">MELILISGLSGSGKSVALNLLEDSGYYCVDNLPVVMLTVLIGMLKEEHVHKVAVAIDARSGHGIDLLPGKLDKLKRSGINLTFLFLFSHEETLLKRYSESRRRHPLATKGQTLEEAIRAERALLDPISDLGHRIDTSGMKANALREWVRQFIEAEPGQGLTLMFESFGFKYGIPLDADLVFDVRCLPNPHYDPELRPFNGKDKPIIDFLEGEDEVCRMRDDIARFVDTWLPCYIRDNRNYLTVAIGCTGGQHRSVYIAEWLAGEFANRARVLVRHRTLAGT</sequence>
<feature type="chain" id="PRO_0000258958" description="Nucleotide-binding protein Daro_0070">
    <location>
        <begin position="1"/>
        <end position="281"/>
    </location>
</feature>
<feature type="binding site" evidence="1">
    <location>
        <begin position="8"/>
        <end position="15"/>
    </location>
    <ligand>
        <name>ATP</name>
        <dbReference type="ChEBI" id="CHEBI:30616"/>
    </ligand>
</feature>
<feature type="binding site" evidence="1">
    <location>
        <begin position="57"/>
        <end position="60"/>
    </location>
    <ligand>
        <name>GTP</name>
        <dbReference type="ChEBI" id="CHEBI:37565"/>
    </ligand>
</feature>
<organism>
    <name type="scientific">Dechloromonas aromatica (strain RCB)</name>
    <dbReference type="NCBI Taxonomy" id="159087"/>
    <lineage>
        <taxon>Bacteria</taxon>
        <taxon>Pseudomonadati</taxon>
        <taxon>Pseudomonadota</taxon>
        <taxon>Betaproteobacteria</taxon>
        <taxon>Rhodocyclales</taxon>
        <taxon>Azonexaceae</taxon>
        <taxon>Dechloromonas</taxon>
    </lineage>
</organism>
<gene>
    <name type="ordered locus">Daro_0070</name>
</gene>
<protein>
    <recommendedName>
        <fullName evidence="1">Nucleotide-binding protein Daro_0070</fullName>
    </recommendedName>
</protein>